<dbReference type="GO" id="GO:0005576">
    <property type="term" value="C:extracellular region"/>
    <property type="evidence" value="ECO:0007669"/>
    <property type="project" value="UniProtKB-SubCell"/>
</dbReference>
<dbReference type="GO" id="GO:0005179">
    <property type="term" value="F:hormone activity"/>
    <property type="evidence" value="ECO:0007669"/>
    <property type="project" value="UniProtKB-KW"/>
</dbReference>
<dbReference type="GO" id="GO:0007218">
    <property type="term" value="P:neuropeptide signaling pathway"/>
    <property type="evidence" value="ECO:0007669"/>
    <property type="project" value="UniProtKB-KW"/>
</dbReference>
<dbReference type="InterPro" id="IPR013152">
    <property type="entry name" value="Gastrin/cholecystokinin_CS"/>
</dbReference>
<dbReference type="InterPro" id="IPR013259">
    <property type="entry name" value="Sulfakinin"/>
</dbReference>
<dbReference type="Pfam" id="PF08257">
    <property type="entry name" value="Sulfakinin"/>
    <property type="match status" value="1"/>
</dbReference>
<dbReference type="PROSITE" id="PS00259">
    <property type="entry name" value="GASTRIN"/>
    <property type="match status" value="1"/>
</dbReference>
<protein>
    <recommendedName>
        <fullName evidence="4">Sulfakinin-1</fullName>
        <shortName evidence="4">PycSu-SK-1</shortName>
    </recommendedName>
</protein>
<comment type="function">
    <text evidence="1">Myotropic peptide.</text>
</comment>
<comment type="subcellular location">
    <subcellularLocation>
        <location evidence="5">Secreted</location>
    </subcellularLocation>
</comment>
<comment type="similarity">
    <text evidence="2">Belongs to the gastrin/cholecystokinin family.</text>
</comment>
<name>SK1_PYCSU</name>
<proteinExistence type="evidence at protein level"/>
<feature type="peptide" id="PRO_0000378899" description="Sulfakinin-1" evidence="3">
    <location>
        <begin position="1"/>
        <end position="11"/>
    </location>
</feature>
<feature type="modified residue" description="Sulfotyrosine" evidence="1">
    <location>
        <position position="6"/>
    </location>
</feature>
<feature type="modified residue" description="Phenylalanine amide" evidence="3">
    <location>
        <position position="11"/>
    </location>
</feature>
<accession>P85765</accession>
<sequence>EQFEDYGHMRF</sequence>
<evidence type="ECO:0000250" key="1">
    <source>
        <dbReference type="UniProtKB" id="P41493"/>
    </source>
</evidence>
<evidence type="ECO:0000255" key="2"/>
<evidence type="ECO:0000269" key="3">
    <source>
    </source>
</evidence>
<evidence type="ECO:0000303" key="4">
    <source>
    </source>
</evidence>
<evidence type="ECO:0000305" key="5"/>
<keyword id="KW-0027">Amidation</keyword>
<keyword id="KW-0903">Direct protein sequencing</keyword>
<keyword id="KW-0372">Hormone</keyword>
<keyword id="KW-0527">Neuropeptide</keyword>
<keyword id="KW-0964">Secreted</keyword>
<keyword id="KW-0765">Sulfation</keyword>
<organism>
    <name type="scientific">Pycnoscelus surinamensis</name>
    <name type="common">Surinam cockroach</name>
    <name type="synonym">Blatta surinamensis</name>
    <dbReference type="NCBI Taxonomy" id="36961"/>
    <lineage>
        <taxon>Eukaryota</taxon>
        <taxon>Metazoa</taxon>
        <taxon>Ecdysozoa</taxon>
        <taxon>Arthropoda</taxon>
        <taxon>Hexapoda</taxon>
        <taxon>Insecta</taxon>
        <taxon>Pterygota</taxon>
        <taxon>Neoptera</taxon>
        <taxon>Polyneoptera</taxon>
        <taxon>Dictyoptera</taxon>
        <taxon>Blattodea</taxon>
        <taxon>Blaberoidea</taxon>
        <taxon>Blaberidae</taxon>
        <taxon>Pycnoscelinae</taxon>
        <taxon>Pycnoscelus</taxon>
    </lineage>
</organism>
<reference evidence="5" key="1">
    <citation type="journal article" date="2009" name="BMC Evol. Biol.">
        <title>A proteomic approach for studying insect phylogeny: CAPA peptides of ancient insect taxa (Dictyoptera, Blattoptera) as a test case.</title>
        <authorList>
            <person name="Roth S."/>
            <person name="Fromm B."/>
            <person name="Gaede G."/>
            <person name="Predel R."/>
        </authorList>
    </citation>
    <scope>PROTEIN SEQUENCE</scope>
    <scope>AMIDATION AT PHE-11</scope>
    <source>
        <tissue evidence="3">Corpora cardiaca</tissue>
    </source>
</reference>